<sequence>MFNGKNILITGGTGSFGKTYTKVLLENYKPNKIIIYSRDELKQFEMSSIFNSNCMRYFIGDVRDKERLSVAMRDVDFVIHAAAMKHVPVAEYNPMECIKTNIHGAQNVIDACFENGVKKCIALSTDKACNPVNLYGATKLASDKLFVAANNIAGNKQTRFSVTRYGNVVGSRGSVVPFFKKLIAQGSKELPITDTRMTRFWISLEDGVKFVLSNFERMHGGEIFIPKIPSMKITNLAHALAPNLSHKIIGIRAGEKLHEIMISSDDSHLTYEFENYYAISPSIKLVDQESDFSINALGEKGQKVKDGFSYSSDNNPQWASEKELLDIINHTEGF</sequence>
<name>PSEB_CAMJJ</name>
<keyword id="KW-0456">Lyase</keyword>
<keyword id="KW-0521">NADP</keyword>
<keyword id="KW-0547">Nucleotide-binding</keyword>
<comment type="function">
    <text evidence="3">Catalyzes the first step in the biosynthesis of pseudaminic acid, a sialic-acid-like sugar that is used to modify flagellin. Has both C6 dehydratase and C5 epimerase activities that result in the production of both UDP-2-acetamido-2,6-dideoxy-beta-L-arabino-4-hexulose and UDP-2-acetamido-2,6-dideoxy-alpha-D-xylo-4-hexulose.</text>
</comment>
<comment type="catalytic activity">
    <reaction>
        <text>UDP-N-acetyl-alpha-D-glucosamine = UDP-2-acetamido-2,6-dideoxy-beta-L-arabino-hex-4-ulose + H2O</text>
        <dbReference type="Rhea" id="RHEA:26111"/>
        <dbReference type="ChEBI" id="CHEBI:15377"/>
        <dbReference type="ChEBI" id="CHEBI:57705"/>
        <dbReference type="ChEBI" id="CHEBI:60101"/>
        <dbReference type="EC" id="4.2.1.115"/>
    </reaction>
</comment>
<comment type="cofactor">
    <cofactor evidence="1">
        <name>NADP(+)</name>
        <dbReference type="ChEBI" id="CHEBI:58349"/>
    </cofactor>
</comment>
<comment type="subunit">
    <text evidence="1">Homohexamer.</text>
</comment>
<comment type="disruption phenotype">
    <text evidence="2">Cells are non-motile and non-flagellated and accumulate unglycosylated flagellin intracellularly.</text>
</comment>
<comment type="similarity">
    <text evidence="4">Belongs to the polysaccharide synthase family.</text>
</comment>
<evidence type="ECO:0000250" key="1"/>
<evidence type="ECO:0000269" key="2">
    <source>
    </source>
</evidence>
<evidence type="ECO:0000269" key="3">
    <source>
    </source>
</evidence>
<evidence type="ECO:0000305" key="4"/>
<accession>Q5QKR8</accession>
<feature type="chain" id="PRO_0000418956" description="UDP-N-acetylglucosamine 4,6-dehydratase (inverting)">
    <location>
        <begin position="1"/>
        <end position="334"/>
    </location>
</feature>
<feature type="active site" evidence="1">
    <location>
        <position position="127"/>
    </location>
</feature>
<feature type="binding site" evidence="1">
    <location>
        <begin position="13"/>
        <end position="16"/>
    </location>
    <ligand>
        <name>NADP(+)</name>
        <dbReference type="ChEBI" id="CHEBI:58349"/>
    </ligand>
</feature>
<feature type="binding site" evidence="1">
    <location>
        <begin position="37"/>
        <end position="42"/>
    </location>
    <ligand>
        <name>NADP(+)</name>
        <dbReference type="ChEBI" id="CHEBI:58349"/>
    </ligand>
</feature>
<feature type="binding site" evidence="1">
    <location>
        <begin position="61"/>
        <end position="62"/>
    </location>
    <ligand>
        <name>NADP(+)</name>
        <dbReference type="ChEBI" id="CHEBI:58349"/>
    </ligand>
</feature>
<feature type="binding site" evidence="1">
    <location>
        <position position="81"/>
    </location>
    <ligand>
        <name>NADP(+)</name>
        <dbReference type="ChEBI" id="CHEBI:58349"/>
    </ligand>
</feature>
<feature type="binding site" evidence="1">
    <location>
        <position position="85"/>
    </location>
    <ligand>
        <name>NADP(+)</name>
        <dbReference type="ChEBI" id="CHEBI:58349"/>
    </ligand>
</feature>
<feature type="binding site" evidence="1">
    <location>
        <position position="85"/>
    </location>
    <ligand>
        <name>substrate</name>
    </ligand>
</feature>
<feature type="binding site" evidence="1">
    <location>
        <begin position="123"/>
        <end position="124"/>
    </location>
    <ligand>
        <name>NADP(+)</name>
        <dbReference type="ChEBI" id="CHEBI:58349"/>
    </ligand>
</feature>
<feature type="binding site" evidence="1">
    <location>
        <position position="135"/>
    </location>
    <ligand>
        <name>NADP(+)</name>
        <dbReference type="ChEBI" id="CHEBI:58349"/>
    </ligand>
</feature>
<feature type="binding site" evidence="1">
    <location>
        <position position="139"/>
    </location>
    <ligand>
        <name>NADP(+)</name>
        <dbReference type="ChEBI" id="CHEBI:58349"/>
    </ligand>
</feature>
<feature type="binding site" evidence="1">
    <location>
        <position position="167"/>
    </location>
    <ligand>
        <name>substrate</name>
    </ligand>
</feature>
<feature type="binding site" evidence="1">
    <location>
        <begin position="168"/>
        <end position="172"/>
    </location>
    <ligand>
        <name>NADP(+)</name>
        <dbReference type="ChEBI" id="CHEBI:58349"/>
    </ligand>
</feature>
<feature type="binding site" evidence="1">
    <location>
        <position position="175"/>
    </location>
    <ligand>
        <name>substrate</name>
    </ligand>
</feature>
<feature type="binding site" evidence="1">
    <location>
        <position position="193"/>
    </location>
    <ligand>
        <name>substrate</name>
    </ligand>
</feature>
<feature type="binding site" evidence="1">
    <location>
        <position position="252"/>
    </location>
    <ligand>
        <name>substrate</name>
    </ligand>
</feature>
<feature type="binding site" evidence="1">
    <location>
        <position position="255"/>
    </location>
    <ligand>
        <name>substrate</name>
    </ligand>
</feature>
<organism>
    <name type="scientific">Campylobacter jejuni subsp. jejuni serotype O:23/36 (strain 81-176)</name>
    <dbReference type="NCBI Taxonomy" id="354242"/>
    <lineage>
        <taxon>Bacteria</taxon>
        <taxon>Pseudomonadati</taxon>
        <taxon>Campylobacterota</taxon>
        <taxon>Epsilonproteobacteria</taxon>
        <taxon>Campylobacterales</taxon>
        <taxon>Campylobacteraceae</taxon>
        <taxon>Campylobacter</taxon>
    </lineage>
</organism>
<dbReference type="EC" id="4.2.1.115"/>
<dbReference type="EMBL" id="AY102622">
    <property type="protein sequence ID" value="AAP12668.1"/>
    <property type="molecule type" value="Genomic_DNA"/>
</dbReference>
<dbReference type="EMBL" id="DQ493920">
    <property type="protein sequence ID" value="ABF83716.1"/>
    <property type="molecule type" value="Genomic_DNA"/>
</dbReference>
<dbReference type="EMBL" id="CP000538">
    <property type="protein sequence ID" value="EAQ72897.1"/>
    <property type="molecule type" value="Genomic_DNA"/>
</dbReference>
<dbReference type="RefSeq" id="WP_002869093.1">
    <property type="nucleotide sequence ID" value="NC_008787.1"/>
</dbReference>
<dbReference type="SMR" id="Q5QKR8"/>
<dbReference type="KEGG" id="cjj:CJJ81176_1310"/>
<dbReference type="eggNOG" id="COG1086">
    <property type="taxonomic scope" value="Bacteria"/>
</dbReference>
<dbReference type="HOGENOM" id="CLU_013560_4_1_7"/>
<dbReference type="Proteomes" id="UP000000646">
    <property type="component" value="Chromosome"/>
</dbReference>
<dbReference type="GO" id="GO:0016829">
    <property type="term" value="F:lyase activity"/>
    <property type="evidence" value="ECO:0007669"/>
    <property type="project" value="UniProtKB-KW"/>
</dbReference>
<dbReference type="GO" id="GO:0000166">
    <property type="term" value="F:nucleotide binding"/>
    <property type="evidence" value="ECO:0007669"/>
    <property type="project" value="UniProtKB-KW"/>
</dbReference>
<dbReference type="CDD" id="cd05237">
    <property type="entry name" value="UDP_invert_4-6DH_SDR_e"/>
    <property type="match status" value="1"/>
</dbReference>
<dbReference type="Gene3D" id="3.40.50.720">
    <property type="entry name" value="NAD(P)-binding Rossmann-like Domain"/>
    <property type="match status" value="1"/>
</dbReference>
<dbReference type="InterPro" id="IPR036291">
    <property type="entry name" value="NAD(P)-bd_dom_sf"/>
</dbReference>
<dbReference type="InterPro" id="IPR003869">
    <property type="entry name" value="Polysac_CapD-like"/>
</dbReference>
<dbReference type="InterPro" id="IPR051203">
    <property type="entry name" value="Polysaccharide_Synthase-Rel"/>
</dbReference>
<dbReference type="InterPro" id="IPR020025">
    <property type="entry name" value="PseB"/>
</dbReference>
<dbReference type="NCBIfam" id="TIGR03589">
    <property type="entry name" value="PseB"/>
    <property type="match status" value="1"/>
</dbReference>
<dbReference type="PANTHER" id="PTHR43318">
    <property type="entry name" value="UDP-N-ACETYLGLUCOSAMINE 4,6-DEHYDRATASE"/>
    <property type="match status" value="1"/>
</dbReference>
<dbReference type="PANTHER" id="PTHR43318:SF2">
    <property type="entry name" value="UDP-N-ACETYLGLUCOSAMINE 4,6-DEHYDRATASE (INVERTING)"/>
    <property type="match status" value="1"/>
</dbReference>
<dbReference type="Pfam" id="PF02719">
    <property type="entry name" value="Polysacc_synt_2"/>
    <property type="match status" value="1"/>
</dbReference>
<dbReference type="SUPFAM" id="SSF51735">
    <property type="entry name" value="NAD(P)-binding Rossmann-fold domains"/>
    <property type="match status" value="1"/>
</dbReference>
<proteinExistence type="inferred from homology"/>
<gene>
    <name type="primary">pseB</name>
    <name type="synonym">flmA</name>
    <name type="ordered locus">CJJ81176_1310</name>
</gene>
<protein>
    <recommendedName>
        <fullName>UDP-N-acetylglucosamine 4,6-dehydratase (inverting)</fullName>
        <ecNumber>4.2.1.115</ecNumber>
    </recommendedName>
    <alternativeName>
        <fullName>Pseudaminic acid biosynthesis protein B</fullName>
    </alternativeName>
    <alternativeName>
        <fullName>UDP-GlcNAc-inverting 4,6-dehydratase</fullName>
    </alternativeName>
</protein>
<reference key="1">
    <citation type="journal article" date="2001" name="J. Biol. Chem.">
        <title>Identification of the carbohydrate moieties and glycosylation motifs in Campylobacter jejuni flagellin.</title>
        <authorList>
            <person name="Thibault P."/>
            <person name="Logan S.M."/>
            <person name="Kelly J.F."/>
            <person name="Brisson J.-R."/>
            <person name="Ewing C.P."/>
            <person name="Trust T.J."/>
            <person name="Guerry P."/>
        </authorList>
    </citation>
    <scope>NUCLEOTIDE SEQUENCE [GENOMIC DNA]</scope>
    <source>
        <strain>81-176</strain>
    </source>
</reference>
<reference key="2">
    <citation type="journal article" date="2006" name="Infect. Immun.">
        <title>Unique features of a highly pathogenic Campylobacter jejuni strain.</title>
        <authorList>
            <person name="Hofreuter D."/>
            <person name="Tsai J."/>
            <person name="Watson R.O."/>
            <person name="Novik V."/>
            <person name="Altman B."/>
            <person name="Benitez M."/>
            <person name="Clark C."/>
            <person name="Perbost C."/>
            <person name="Jarvie T."/>
            <person name="Du L."/>
            <person name="Galan J.E."/>
        </authorList>
    </citation>
    <scope>NUCLEOTIDE SEQUENCE [GENOMIC DNA]</scope>
    <source>
        <strain>81-176</strain>
    </source>
</reference>
<reference key="3">
    <citation type="submission" date="2006-12" db="EMBL/GenBank/DDBJ databases">
        <authorList>
            <person name="Fouts D.E."/>
            <person name="Nelson K.E."/>
            <person name="Sebastian Y."/>
        </authorList>
    </citation>
    <scope>NUCLEOTIDE SEQUENCE [LARGE SCALE GENOMIC DNA]</scope>
    <source>
        <strain>81-176</strain>
    </source>
</reference>
<reference key="4">
    <citation type="journal article" date="2003" name="Mol. Microbiol.">
        <title>Pseudaminic acid, the major modification on Campylobacter flagellin, is synthesized via the Cj1293 gene.</title>
        <authorList>
            <person name="Goon S."/>
            <person name="Kelly J.F."/>
            <person name="Logan S.M."/>
            <person name="Ewing C.P."/>
            <person name="Guerry P."/>
        </authorList>
    </citation>
    <scope>PATHWAY</scope>
    <scope>DISRUPTION PHENOTYPE</scope>
    <source>
        <strain>81-176</strain>
    </source>
</reference>
<reference key="5">
    <citation type="journal article" date="2006" name="J. Biol. Chem.">
        <title>Functional characterization of the flagellar glycosylation locus in Campylobacter jejuni 81-176 using a focused metabolomics approach.</title>
        <authorList>
            <person name="McNally D.J."/>
            <person name="Hui J.P."/>
            <person name="Aubry A.J."/>
            <person name="Mui K.K."/>
            <person name="Guerry P."/>
            <person name="Brisson J.R."/>
            <person name="Logan S.M."/>
            <person name="Soo E.C."/>
        </authorList>
    </citation>
    <scope>FUNCTION</scope>
    <source>
        <strain>81-176</strain>
    </source>
</reference>